<reference key="1">
    <citation type="journal article" date="1988" name="EMBO J.">
        <title>A novel replicon occurring naturally in Escherichia coli is a phage-plasmid hybrid.</title>
        <authorList>
            <person name="Seufert W."/>
            <person name="Lurz R."/>
            <person name="Messer W."/>
        </authorList>
    </citation>
    <scope>NUCLEOTIDE SEQUENCE [GENOMIC DNA]</scope>
</reference>
<proteinExistence type="predicted"/>
<sequence length="285" mass="32198">MLLNKDRFGKLTSKSLDSIAALGLREANAELPCLFRNNSIESSSKTPPEPLSPLAFELSTNLKKSASALAWNVQYFVDTYGLSNVGFLTLTFRDHVTDPKEAQRRFNSLKTNILAKRYRAYIRVMEPMKSGRIHYHLLVALHSDIRTGFDFPAVYRQDYSSANKAIRSEWSFWRKTAPKYGFGRTELMPVRSNSEGIGRYVGKYISKGIESRTEQFKGVRLVEYSRKAKSLLRASSSFLTGLMSGVANFRYSFITSRTIWAVNQLLTAYAVFSALVGRITGVILL</sequence>
<organism>
    <name type="scientific">Escherichia coli</name>
    <dbReference type="NCBI Taxonomy" id="562"/>
    <lineage>
        <taxon>Bacteria</taxon>
        <taxon>Pseudomonadati</taxon>
        <taxon>Pseudomonadota</taxon>
        <taxon>Gammaproteobacteria</taxon>
        <taxon>Enterobacterales</taxon>
        <taxon>Enterobacteriaceae</taxon>
        <taxon>Escherichia</taxon>
    </lineage>
</organism>
<protein>
    <recommendedName>
        <fullName>Phasyl DNA replicon protein arp</fullName>
    </recommendedName>
</protein>
<name>PARP_ECOLX</name>
<feature type="chain" id="PRO_0000058233" description="Phasyl DNA replicon protein arp">
    <location>
        <begin position="1"/>
        <end position="285"/>
    </location>
</feature>
<accession>P19071</accession>
<keyword id="KW-0235">DNA replication</keyword>
<keyword id="KW-0238">DNA-binding</keyword>
<dbReference type="EMBL" id="X56069">
    <property type="protein sequence ID" value="CAA39547.1"/>
    <property type="molecule type" value="Genomic_DNA"/>
</dbReference>
<dbReference type="EMBL" id="X14141">
    <property type="protein sequence ID" value="CAA32359.1"/>
    <property type="molecule type" value="Genomic_DNA"/>
</dbReference>
<dbReference type="PIR" id="S02390">
    <property type="entry name" value="S02390"/>
</dbReference>
<dbReference type="GO" id="GO:0003677">
    <property type="term" value="F:DNA binding"/>
    <property type="evidence" value="ECO:0007669"/>
    <property type="project" value="UniProtKB-KW"/>
</dbReference>
<dbReference type="GO" id="GO:0006260">
    <property type="term" value="P:DNA replication"/>
    <property type="evidence" value="ECO:0007669"/>
    <property type="project" value="UniProtKB-KW"/>
</dbReference>
<dbReference type="InterPro" id="IPR056906">
    <property type="entry name" value="ORF2/G2P_dom"/>
</dbReference>
<dbReference type="Pfam" id="PF23343">
    <property type="entry name" value="REP_ORF2-G2P"/>
    <property type="match status" value="1"/>
</dbReference>
<comment type="function">
    <text>Essential for autonomous replication of the phasyl DNA replicon.</text>
</comment>
<gene>
    <name type="primary">arp</name>
</gene>